<comment type="function">
    <text evidence="1">Produces ATP from ADP in the presence of a proton gradient across the membrane. The alpha chain is a regulatory subunit.</text>
</comment>
<comment type="catalytic activity">
    <reaction evidence="1">
        <text>ATP + H2O + 4 H(+)(in) = ADP + phosphate + 5 H(+)(out)</text>
        <dbReference type="Rhea" id="RHEA:57720"/>
        <dbReference type="ChEBI" id="CHEBI:15377"/>
        <dbReference type="ChEBI" id="CHEBI:15378"/>
        <dbReference type="ChEBI" id="CHEBI:30616"/>
        <dbReference type="ChEBI" id="CHEBI:43474"/>
        <dbReference type="ChEBI" id="CHEBI:456216"/>
        <dbReference type="EC" id="7.1.2.2"/>
    </reaction>
</comment>
<comment type="subunit">
    <text evidence="1">F-type ATPases have 2 components, CF(1) - the catalytic core - and CF(0) - the membrane proton channel. CF(1) has five subunits: alpha(3), beta(3), gamma(1), delta(1), epsilon(1). CF(0) has four main subunits: a, b, b' and c.</text>
</comment>
<comment type="subcellular location">
    <subcellularLocation>
        <location evidence="1">Plastid</location>
        <location evidence="1">Chloroplast thylakoid membrane</location>
        <topology evidence="1">Peripheral membrane protein</topology>
    </subcellularLocation>
</comment>
<comment type="similarity">
    <text evidence="1">Belongs to the ATPase alpha/beta chains family.</text>
</comment>
<proteinExistence type="inferred from homology"/>
<sequence>MVTIRADEISNIIRERIEQYNREVKIVNTGTVLQVGDGIARIHGLDEVMAGELVEFEEGTIGIALNLESNNVGVVLMGDGLLIQEGSSVKATGRIAQIPVSEAYLGRVVNALAKPIDGRGEISASEFRLIESAAPGIISRRSVYEPLQTGLIAIDSMIPIGRGQRELIIGDRQTGKTAVATDTILNQQGQNVICVYVAIGQKASSVAQVVTTLQERGAMEYTIVVAETADSPATLQYLAPYTGAALAEYFMYRERHTLIIYDDLSKQAQAYRQMSLLLRRPPGREAYPGDVFYLHSRLLERAAKLSSSLGEGSMTALPIVETQSGDVSAYIPTNVISITDGQIFLSADLFNSGIRPAINVGISVSRVGSAAQIKAMKQVAGKLKLELAQFAELEAFAQFASDLDKATQNQLARGQRLRELLKQSQSAPLTVEEQIMTIYTGTNGYLDSLEVGQVRKFLVELRTYLKTTKPQFQEIISSTKTFTEEAEALLKEAIQEQMDRFILQEQA</sequence>
<gene>
    <name evidence="1" type="primary">atpA</name>
</gene>
<organism>
    <name type="scientific">Solanum bulbocastanum</name>
    <name type="common">Wild potato</name>
    <dbReference type="NCBI Taxonomy" id="147425"/>
    <lineage>
        <taxon>Eukaryota</taxon>
        <taxon>Viridiplantae</taxon>
        <taxon>Streptophyta</taxon>
        <taxon>Embryophyta</taxon>
        <taxon>Tracheophyta</taxon>
        <taxon>Spermatophyta</taxon>
        <taxon>Magnoliopsida</taxon>
        <taxon>eudicotyledons</taxon>
        <taxon>Gunneridae</taxon>
        <taxon>Pentapetalae</taxon>
        <taxon>asterids</taxon>
        <taxon>lamiids</taxon>
        <taxon>Solanales</taxon>
        <taxon>Solanaceae</taxon>
        <taxon>Solanoideae</taxon>
        <taxon>Solaneae</taxon>
        <taxon>Solanum</taxon>
    </lineage>
</organism>
<name>ATPA_SOLBU</name>
<dbReference type="EC" id="7.1.2.2" evidence="1"/>
<dbReference type="EMBL" id="DQ347958">
    <property type="protein sequence ID" value="ABC56198.1"/>
    <property type="molecule type" value="Genomic_DNA"/>
</dbReference>
<dbReference type="RefSeq" id="YP_538833.1">
    <property type="nucleotide sequence ID" value="NC_007943.1"/>
</dbReference>
<dbReference type="SMR" id="Q2MIK2"/>
<dbReference type="GeneID" id="3989461"/>
<dbReference type="GO" id="GO:0009535">
    <property type="term" value="C:chloroplast thylakoid membrane"/>
    <property type="evidence" value="ECO:0007669"/>
    <property type="project" value="UniProtKB-SubCell"/>
</dbReference>
<dbReference type="GO" id="GO:0045259">
    <property type="term" value="C:proton-transporting ATP synthase complex"/>
    <property type="evidence" value="ECO:0007669"/>
    <property type="project" value="UniProtKB-KW"/>
</dbReference>
<dbReference type="GO" id="GO:0043531">
    <property type="term" value="F:ADP binding"/>
    <property type="evidence" value="ECO:0007669"/>
    <property type="project" value="TreeGrafter"/>
</dbReference>
<dbReference type="GO" id="GO:0005524">
    <property type="term" value="F:ATP binding"/>
    <property type="evidence" value="ECO:0007669"/>
    <property type="project" value="UniProtKB-UniRule"/>
</dbReference>
<dbReference type="GO" id="GO:0046933">
    <property type="term" value="F:proton-transporting ATP synthase activity, rotational mechanism"/>
    <property type="evidence" value="ECO:0007669"/>
    <property type="project" value="UniProtKB-UniRule"/>
</dbReference>
<dbReference type="CDD" id="cd18113">
    <property type="entry name" value="ATP-synt_F1_alpha_C"/>
    <property type="match status" value="1"/>
</dbReference>
<dbReference type="CDD" id="cd18116">
    <property type="entry name" value="ATP-synt_F1_alpha_N"/>
    <property type="match status" value="1"/>
</dbReference>
<dbReference type="CDD" id="cd01132">
    <property type="entry name" value="F1-ATPase_alpha_CD"/>
    <property type="match status" value="1"/>
</dbReference>
<dbReference type="FunFam" id="1.20.150.20:FF:000001">
    <property type="entry name" value="ATP synthase subunit alpha"/>
    <property type="match status" value="1"/>
</dbReference>
<dbReference type="FunFam" id="2.40.30.20:FF:000001">
    <property type="entry name" value="ATP synthase subunit alpha"/>
    <property type="match status" value="1"/>
</dbReference>
<dbReference type="FunFam" id="3.40.50.300:FF:000002">
    <property type="entry name" value="ATP synthase subunit alpha"/>
    <property type="match status" value="1"/>
</dbReference>
<dbReference type="Gene3D" id="2.40.30.20">
    <property type="match status" value="1"/>
</dbReference>
<dbReference type="Gene3D" id="1.20.150.20">
    <property type="entry name" value="ATP synthase alpha/beta chain, C-terminal domain"/>
    <property type="match status" value="1"/>
</dbReference>
<dbReference type="Gene3D" id="3.40.50.300">
    <property type="entry name" value="P-loop containing nucleotide triphosphate hydrolases"/>
    <property type="match status" value="1"/>
</dbReference>
<dbReference type="HAMAP" id="MF_01346">
    <property type="entry name" value="ATP_synth_alpha_bact"/>
    <property type="match status" value="1"/>
</dbReference>
<dbReference type="InterPro" id="IPR023366">
    <property type="entry name" value="ATP_synth_asu-like_sf"/>
</dbReference>
<dbReference type="InterPro" id="IPR000793">
    <property type="entry name" value="ATP_synth_asu_C"/>
</dbReference>
<dbReference type="InterPro" id="IPR038376">
    <property type="entry name" value="ATP_synth_asu_C_sf"/>
</dbReference>
<dbReference type="InterPro" id="IPR033732">
    <property type="entry name" value="ATP_synth_F1_a_nt-bd_dom"/>
</dbReference>
<dbReference type="InterPro" id="IPR005294">
    <property type="entry name" value="ATP_synth_F1_asu"/>
</dbReference>
<dbReference type="InterPro" id="IPR020003">
    <property type="entry name" value="ATPase_a/bsu_AS"/>
</dbReference>
<dbReference type="InterPro" id="IPR004100">
    <property type="entry name" value="ATPase_F1/V1/A1_a/bsu_N"/>
</dbReference>
<dbReference type="InterPro" id="IPR036121">
    <property type="entry name" value="ATPase_F1/V1/A1_a/bsu_N_sf"/>
</dbReference>
<dbReference type="InterPro" id="IPR000194">
    <property type="entry name" value="ATPase_F1/V1/A1_a/bsu_nucl-bd"/>
</dbReference>
<dbReference type="InterPro" id="IPR027417">
    <property type="entry name" value="P-loop_NTPase"/>
</dbReference>
<dbReference type="NCBIfam" id="TIGR00962">
    <property type="entry name" value="atpA"/>
    <property type="match status" value="1"/>
</dbReference>
<dbReference type="NCBIfam" id="NF009884">
    <property type="entry name" value="PRK13343.1"/>
    <property type="match status" value="1"/>
</dbReference>
<dbReference type="PANTHER" id="PTHR48082">
    <property type="entry name" value="ATP SYNTHASE SUBUNIT ALPHA, MITOCHONDRIAL"/>
    <property type="match status" value="1"/>
</dbReference>
<dbReference type="PANTHER" id="PTHR48082:SF2">
    <property type="entry name" value="ATP SYNTHASE SUBUNIT ALPHA, MITOCHONDRIAL"/>
    <property type="match status" value="1"/>
</dbReference>
<dbReference type="Pfam" id="PF00006">
    <property type="entry name" value="ATP-synt_ab"/>
    <property type="match status" value="1"/>
</dbReference>
<dbReference type="Pfam" id="PF00306">
    <property type="entry name" value="ATP-synt_ab_C"/>
    <property type="match status" value="1"/>
</dbReference>
<dbReference type="Pfam" id="PF02874">
    <property type="entry name" value="ATP-synt_ab_N"/>
    <property type="match status" value="1"/>
</dbReference>
<dbReference type="PIRSF" id="PIRSF039088">
    <property type="entry name" value="F_ATPase_subunit_alpha"/>
    <property type="match status" value="1"/>
</dbReference>
<dbReference type="SUPFAM" id="SSF47917">
    <property type="entry name" value="C-terminal domain of alpha and beta subunits of F1 ATP synthase"/>
    <property type="match status" value="1"/>
</dbReference>
<dbReference type="SUPFAM" id="SSF50615">
    <property type="entry name" value="N-terminal domain of alpha and beta subunits of F1 ATP synthase"/>
    <property type="match status" value="1"/>
</dbReference>
<dbReference type="SUPFAM" id="SSF52540">
    <property type="entry name" value="P-loop containing nucleoside triphosphate hydrolases"/>
    <property type="match status" value="1"/>
</dbReference>
<dbReference type="PROSITE" id="PS00152">
    <property type="entry name" value="ATPASE_ALPHA_BETA"/>
    <property type="match status" value="1"/>
</dbReference>
<geneLocation type="chloroplast"/>
<protein>
    <recommendedName>
        <fullName evidence="1">ATP synthase subunit alpha, chloroplastic</fullName>
        <ecNumber evidence="1">7.1.2.2</ecNumber>
    </recommendedName>
    <alternativeName>
        <fullName evidence="1">ATP synthase F1 sector subunit alpha</fullName>
    </alternativeName>
    <alternativeName>
        <fullName evidence="1">F-ATPase subunit alpha</fullName>
    </alternativeName>
</protein>
<feature type="chain" id="PRO_0000238441" description="ATP synthase subunit alpha, chloroplastic">
    <location>
        <begin position="1"/>
        <end position="507"/>
    </location>
</feature>
<feature type="binding site" evidence="1">
    <location>
        <begin position="170"/>
        <end position="177"/>
    </location>
    <ligand>
        <name>ATP</name>
        <dbReference type="ChEBI" id="CHEBI:30616"/>
    </ligand>
</feature>
<feature type="site" description="Required for activity" evidence="1">
    <location>
        <position position="363"/>
    </location>
</feature>
<keyword id="KW-0066">ATP synthesis</keyword>
<keyword id="KW-0067">ATP-binding</keyword>
<keyword id="KW-0139">CF(1)</keyword>
<keyword id="KW-0150">Chloroplast</keyword>
<keyword id="KW-0375">Hydrogen ion transport</keyword>
<keyword id="KW-0406">Ion transport</keyword>
<keyword id="KW-0472">Membrane</keyword>
<keyword id="KW-0547">Nucleotide-binding</keyword>
<keyword id="KW-0934">Plastid</keyword>
<keyword id="KW-0793">Thylakoid</keyword>
<keyword id="KW-1278">Translocase</keyword>
<keyword id="KW-0813">Transport</keyword>
<accession>Q2MIK2</accession>
<evidence type="ECO:0000255" key="1">
    <source>
        <dbReference type="HAMAP-Rule" id="MF_01346"/>
    </source>
</evidence>
<reference key="1">
    <citation type="journal article" date="2006" name="Theor. Appl. Genet.">
        <title>Complete chloroplast genome sequences of Solanum bulbocastanum, Solanum lycopersicum and comparative analyses with other Solanaceae genomes.</title>
        <authorList>
            <person name="Daniell H."/>
            <person name="Lee S.-B."/>
            <person name="Grevich J."/>
            <person name="Saski C."/>
            <person name="Quesada-Vargas T."/>
            <person name="Guda C."/>
            <person name="Tomkins J."/>
            <person name="Jansen R.K."/>
        </authorList>
    </citation>
    <scope>NUCLEOTIDE SEQUENCE [LARGE SCALE GENOMIC DNA]</scope>
    <source>
        <strain>cv. PT29</strain>
    </source>
</reference>